<reference key="1">
    <citation type="journal article" date="2009" name="J. Bacteriol.">
        <title>Complete genome sequence and comparative genome analysis of enteropathogenic Escherichia coli O127:H6 strain E2348/69.</title>
        <authorList>
            <person name="Iguchi A."/>
            <person name="Thomson N.R."/>
            <person name="Ogura Y."/>
            <person name="Saunders D."/>
            <person name="Ooka T."/>
            <person name="Henderson I.R."/>
            <person name="Harris D."/>
            <person name="Asadulghani M."/>
            <person name="Kurokawa K."/>
            <person name="Dean P."/>
            <person name="Kenny B."/>
            <person name="Quail M.A."/>
            <person name="Thurston S."/>
            <person name="Dougan G."/>
            <person name="Hayashi T."/>
            <person name="Parkhill J."/>
            <person name="Frankel G."/>
        </authorList>
    </citation>
    <scope>NUCLEOTIDE SEQUENCE [LARGE SCALE GENOMIC DNA]</scope>
    <source>
        <strain>E2348/69 / EPEC</strain>
    </source>
</reference>
<gene>
    <name evidence="1" type="primary">aroD</name>
    <name type="ordered locus">E2348C_1778</name>
</gene>
<name>AROD_ECO27</name>
<keyword id="KW-0028">Amino-acid biosynthesis</keyword>
<keyword id="KW-0057">Aromatic amino acid biosynthesis</keyword>
<keyword id="KW-0456">Lyase</keyword>
<keyword id="KW-1185">Reference proteome</keyword>
<keyword id="KW-0704">Schiff base</keyword>
<proteinExistence type="inferred from homology"/>
<comment type="function">
    <text evidence="1">Involved in the third step of the chorismate pathway, which leads to the biosynthesis of aromatic amino acids. Catalyzes the cis-dehydration of 3-dehydroquinate (DHQ) and introduces the first double bond of the aromatic ring to yield 3-dehydroshikimate.</text>
</comment>
<comment type="catalytic activity">
    <reaction evidence="1">
        <text>3-dehydroquinate = 3-dehydroshikimate + H2O</text>
        <dbReference type="Rhea" id="RHEA:21096"/>
        <dbReference type="ChEBI" id="CHEBI:15377"/>
        <dbReference type="ChEBI" id="CHEBI:16630"/>
        <dbReference type="ChEBI" id="CHEBI:32364"/>
        <dbReference type="EC" id="4.2.1.10"/>
    </reaction>
</comment>
<comment type="pathway">
    <text evidence="1">Metabolic intermediate biosynthesis; chorismate biosynthesis; chorismate from D-erythrose 4-phosphate and phosphoenolpyruvate: step 3/7.</text>
</comment>
<comment type="subunit">
    <text evidence="1">Homodimer.</text>
</comment>
<comment type="similarity">
    <text evidence="1">Belongs to the type-I 3-dehydroquinase family.</text>
</comment>
<feature type="chain" id="PRO_1000124781" description="3-dehydroquinate dehydratase">
    <location>
        <begin position="1"/>
        <end position="252"/>
    </location>
</feature>
<feature type="active site" description="Proton donor/acceptor" evidence="1">
    <location>
        <position position="143"/>
    </location>
</feature>
<feature type="active site" description="Schiff-base intermediate with substrate" evidence="1">
    <location>
        <position position="170"/>
    </location>
</feature>
<feature type="binding site" evidence="1">
    <location>
        <position position="21"/>
    </location>
    <ligand>
        <name>3-dehydroquinate</name>
        <dbReference type="ChEBI" id="CHEBI:32364"/>
    </ligand>
</feature>
<feature type="binding site" evidence="1">
    <location>
        <begin position="46"/>
        <end position="48"/>
    </location>
    <ligand>
        <name>3-dehydroquinate</name>
        <dbReference type="ChEBI" id="CHEBI:32364"/>
    </ligand>
</feature>
<feature type="binding site" evidence="1">
    <location>
        <position position="82"/>
    </location>
    <ligand>
        <name>3-dehydroquinate</name>
        <dbReference type="ChEBI" id="CHEBI:32364"/>
    </ligand>
</feature>
<feature type="binding site" evidence="1">
    <location>
        <position position="213"/>
    </location>
    <ligand>
        <name>3-dehydroquinate</name>
        <dbReference type="ChEBI" id="CHEBI:32364"/>
    </ligand>
</feature>
<feature type="binding site" evidence="1">
    <location>
        <position position="232"/>
    </location>
    <ligand>
        <name>3-dehydroquinate</name>
        <dbReference type="ChEBI" id="CHEBI:32364"/>
    </ligand>
</feature>
<feature type="binding site" evidence="1">
    <location>
        <position position="236"/>
    </location>
    <ligand>
        <name>3-dehydroquinate</name>
        <dbReference type="ChEBI" id="CHEBI:32364"/>
    </ligand>
</feature>
<organism>
    <name type="scientific">Escherichia coli O127:H6 (strain E2348/69 / EPEC)</name>
    <dbReference type="NCBI Taxonomy" id="574521"/>
    <lineage>
        <taxon>Bacteria</taxon>
        <taxon>Pseudomonadati</taxon>
        <taxon>Pseudomonadota</taxon>
        <taxon>Gammaproteobacteria</taxon>
        <taxon>Enterobacterales</taxon>
        <taxon>Enterobacteriaceae</taxon>
        <taxon>Escherichia</taxon>
    </lineage>
</organism>
<evidence type="ECO:0000255" key="1">
    <source>
        <dbReference type="HAMAP-Rule" id="MF_00214"/>
    </source>
</evidence>
<dbReference type="EC" id="4.2.1.10" evidence="1"/>
<dbReference type="EMBL" id="FM180568">
    <property type="protein sequence ID" value="CAS09326.1"/>
    <property type="molecule type" value="Genomic_DNA"/>
</dbReference>
<dbReference type="RefSeq" id="WP_000860194.1">
    <property type="nucleotide sequence ID" value="NC_011601.1"/>
</dbReference>
<dbReference type="SMR" id="B7US32"/>
<dbReference type="KEGG" id="ecg:E2348C_1778"/>
<dbReference type="HOGENOM" id="CLU_064444_0_0_6"/>
<dbReference type="UniPathway" id="UPA00053">
    <property type="reaction ID" value="UER00086"/>
</dbReference>
<dbReference type="Proteomes" id="UP000008205">
    <property type="component" value="Chromosome"/>
</dbReference>
<dbReference type="GO" id="GO:0003855">
    <property type="term" value="F:3-dehydroquinate dehydratase activity"/>
    <property type="evidence" value="ECO:0007669"/>
    <property type="project" value="UniProtKB-UniRule"/>
</dbReference>
<dbReference type="GO" id="GO:0046279">
    <property type="term" value="P:3,4-dihydroxybenzoate biosynthetic process"/>
    <property type="evidence" value="ECO:0007669"/>
    <property type="project" value="TreeGrafter"/>
</dbReference>
<dbReference type="GO" id="GO:0008652">
    <property type="term" value="P:amino acid biosynthetic process"/>
    <property type="evidence" value="ECO:0007669"/>
    <property type="project" value="UniProtKB-KW"/>
</dbReference>
<dbReference type="GO" id="GO:0009073">
    <property type="term" value="P:aromatic amino acid family biosynthetic process"/>
    <property type="evidence" value="ECO:0007669"/>
    <property type="project" value="UniProtKB-KW"/>
</dbReference>
<dbReference type="GO" id="GO:0009423">
    <property type="term" value="P:chorismate biosynthetic process"/>
    <property type="evidence" value="ECO:0007669"/>
    <property type="project" value="UniProtKB-UniRule"/>
</dbReference>
<dbReference type="CDD" id="cd00502">
    <property type="entry name" value="DHQase_I"/>
    <property type="match status" value="1"/>
</dbReference>
<dbReference type="FunFam" id="3.20.20.70:FF:000047">
    <property type="entry name" value="3-dehydroquinate dehydratase"/>
    <property type="match status" value="1"/>
</dbReference>
<dbReference type="Gene3D" id="3.20.20.70">
    <property type="entry name" value="Aldolase class I"/>
    <property type="match status" value="1"/>
</dbReference>
<dbReference type="HAMAP" id="MF_00214">
    <property type="entry name" value="AroD"/>
    <property type="match status" value="1"/>
</dbReference>
<dbReference type="InterPro" id="IPR018508">
    <property type="entry name" value="3-dehydroquinate_DH_AS"/>
</dbReference>
<dbReference type="InterPro" id="IPR013785">
    <property type="entry name" value="Aldolase_TIM"/>
</dbReference>
<dbReference type="InterPro" id="IPR001381">
    <property type="entry name" value="DHquinase_I"/>
</dbReference>
<dbReference type="InterPro" id="IPR050146">
    <property type="entry name" value="Type-I_3-dehydroquinase"/>
</dbReference>
<dbReference type="NCBIfam" id="TIGR01093">
    <property type="entry name" value="aroD"/>
    <property type="match status" value="1"/>
</dbReference>
<dbReference type="PANTHER" id="PTHR43699">
    <property type="entry name" value="3-DEHYDROQUINATE DEHYDRATASE"/>
    <property type="match status" value="1"/>
</dbReference>
<dbReference type="PANTHER" id="PTHR43699:SF1">
    <property type="entry name" value="3-DEHYDROQUINATE DEHYDRATASE"/>
    <property type="match status" value="1"/>
</dbReference>
<dbReference type="Pfam" id="PF01487">
    <property type="entry name" value="DHquinase_I"/>
    <property type="match status" value="1"/>
</dbReference>
<dbReference type="SUPFAM" id="SSF51569">
    <property type="entry name" value="Aldolase"/>
    <property type="match status" value="1"/>
</dbReference>
<dbReference type="PROSITE" id="PS01028">
    <property type="entry name" value="DEHYDROQUINASE_I"/>
    <property type="match status" value="1"/>
</dbReference>
<sequence length="252" mass="27449">MKTVTVKDLVIGTGAPKIIVSLMAKDIASVKSEALAYREADFDILEWRVDHYADLSNVESVIAAAKILRETMPEKPLLFTFRSAKEGGEQAISTEAYIALNRAAIDSGLVDMIDLELFTGDDQVKETVAYAHAHDVKVVMSNHDFHKTPEAEEIIARLRKMQSFDADIPKIALMPQSTSDVLTLLAATLEMQEQYADRPIITMSMAKTGVISRLAGEVFGSAATFGAVKKASAPGQISVNDLRTVLTILHQA</sequence>
<protein>
    <recommendedName>
        <fullName evidence="1">3-dehydroquinate dehydratase</fullName>
        <shortName evidence="1">3-dehydroquinase</shortName>
        <ecNumber evidence="1">4.2.1.10</ecNumber>
    </recommendedName>
    <alternativeName>
        <fullName evidence="1">Type I DHQase</fullName>
    </alternativeName>
    <alternativeName>
        <fullName evidence="1">Type I dehydroquinase</fullName>
        <shortName evidence="1">DHQ1</shortName>
    </alternativeName>
</protein>
<accession>B7US32</accession>